<feature type="chain" id="PRO_0000437968" description="Thioredoxin domain-containing protein 17">
    <location>
        <begin position="1"/>
        <end position="123"/>
    </location>
</feature>
<feature type="domain" description="Thioredoxin" evidence="2">
    <location>
        <begin position="41"/>
        <end position="123"/>
    </location>
</feature>
<feature type="active site" description="Nucleophile" evidence="1">
    <location>
        <position position="43"/>
    </location>
</feature>
<feature type="active site" description="Nucleophile" evidence="1">
    <location>
        <position position="46"/>
    </location>
</feature>
<feature type="site" description="Contributes to redox potential value" evidence="1">
    <location>
        <position position="44"/>
    </location>
</feature>
<feature type="site" description="Contributes to redox potential value" evidence="1">
    <location>
        <position position="45"/>
    </location>
</feature>
<feature type="disulfide bond" description="Redox-active" evidence="1">
    <location>
        <begin position="43"/>
        <end position="46"/>
    </location>
</feature>
<dbReference type="EMBL" id="KC969667">
    <property type="protein sequence ID" value="AGT42005.1"/>
    <property type="molecule type" value="mRNA"/>
</dbReference>
<dbReference type="SMR" id="T1SH39"/>
<dbReference type="GO" id="GO:0005829">
    <property type="term" value="C:cytosol"/>
    <property type="evidence" value="ECO:0000250"/>
    <property type="project" value="UniProtKB"/>
</dbReference>
<dbReference type="GO" id="GO:0004601">
    <property type="term" value="F:peroxidase activity"/>
    <property type="evidence" value="ECO:0000250"/>
    <property type="project" value="UniProtKB"/>
</dbReference>
<dbReference type="GO" id="GO:0047134">
    <property type="term" value="F:protein-disulfide reductase [NAD(P)H] activity"/>
    <property type="evidence" value="ECO:0000314"/>
    <property type="project" value="UniProtKB"/>
</dbReference>
<dbReference type="CDD" id="cd02952">
    <property type="entry name" value="TRP14_like"/>
    <property type="match status" value="1"/>
</dbReference>
<dbReference type="FunFam" id="3.40.30.10:FF:000124">
    <property type="entry name" value="Thioredoxin domain-containing 17"/>
    <property type="match status" value="1"/>
</dbReference>
<dbReference type="Gene3D" id="3.40.30.10">
    <property type="entry name" value="Glutaredoxin"/>
    <property type="match status" value="1"/>
</dbReference>
<dbReference type="InterPro" id="IPR036249">
    <property type="entry name" value="Thioredoxin-like_sf"/>
</dbReference>
<dbReference type="InterPro" id="IPR045108">
    <property type="entry name" value="TXNDC17-like"/>
</dbReference>
<dbReference type="InterPro" id="IPR010357">
    <property type="entry name" value="TXNDC17_dom"/>
</dbReference>
<dbReference type="PANTHER" id="PTHR12452">
    <property type="entry name" value="42-9-9 PROTEIN-RELATED"/>
    <property type="match status" value="1"/>
</dbReference>
<dbReference type="PANTHER" id="PTHR12452:SF0">
    <property type="entry name" value="THIOREDOXIN DOMAIN-CONTAINING PROTEIN 17"/>
    <property type="match status" value="1"/>
</dbReference>
<dbReference type="Pfam" id="PF06110">
    <property type="entry name" value="TXD17-like_Trx"/>
    <property type="match status" value="1"/>
</dbReference>
<dbReference type="SUPFAM" id="SSF52833">
    <property type="entry name" value="Thioredoxin-like"/>
    <property type="match status" value="1"/>
</dbReference>
<sequence>MAHYEEVNVRGYDEFCQAVSERKGKDIFAYFSGDKDASGKSWCPDCVTAEPIVRGQMSHLPEGSVFIYCQVGERAYWKDSTNAFKKTLKLSGVPTLLRYGTPQKLVEEECFKADLVRMMFTED</sequence>
<proteinExistence type="evidence at transcript level"/>
<protein>
    <recommendedName>
        <fullName evidence="5">Thioredoxin domain-containing protein 17</fullName>
    </recommendedName>
    <alternativeName>
        <fullName evidence="4">14 kDa thioredoxin-related protein</fullName>
        <shortName evidence="4">TRP14</shortName>
    </alternativeName>
</protein>
<name>TXD17_EPICO</name>
<reference evidence="6" key="1">
    <citation type="journal article" date="2013" name="Fish Shellfish Immunol.">
        <title>Identification and characterization of TRP14, a thioredoxin-related protein of 14 kDa from orange-spotted grouper, Epinephelus coioides.</title>
        <authorList>
            <person name="Wei J."/>
            <person name="Ji H."/>
            <person name="Guo M."/>
            <person name="Yan Y."/>
            <person name="Qin Q."/>
        </authorList>
    </citation>
    <scope>NUCLEOTIDE SEQUENCE [MRNA]</scope>
    <scope>FUNCTION</scope>
    <scope>TISSUE SPECIFICITY</scope>
    <scope>INDUCTION</scope>
    <scope>PHYLOGENETIC ANALYSIS</scope>
</reference>
<comment type="function">
    <text evidence="1 3">Disulfide reductase. May participate in various redox reactions through the reversible oxidation of its active center dithiol to a disulfide and catalyze dithiol-disulfide exchange reactions (PubMed:23994424). Has peroxidase activity and may contribute to the elimination of cellular hydrogen peroxide (By similarity). May function as an antioxidant involved in response to viral infection (PubMed:23994424).</text>
</comment>
<comment type="subcellular location">
    <subcellularLocation>
        <location evidence="1">Cytoplasm</location>
    </subcellularLocation>
</comment>
<comment type="tissue specificity">
    <text evidence="3">Predominantly expressed in liver, brain and muscle. Also expressed in kidney, intestine, skin, stomach, gill and head kidney.</text>
</comment>
<comment type="induction">
    <text evidence="3">Up-regulated in liver in response to Singapore grouper iridovirus (SGIV) infection. 2.8-fold induction after 8 hours post injection of SGIV and the expression increases up to about 70-fold at 72 hours post injection, then decreases to about 26-fold at 120 hours.</text>
</comment>
<comment type="similarity">
    <text evidence="5">Belongs to the thioredoxin family.</text>
</comment>
<organism evidence="6">
    <name type="scientific">Epinephelus coioides</name>
    <name type="common">Orange-spotted grouper</name>
    <name type="synonym">Epinephelus nebulosus</name>
    <dbReference type="NCBI Taxonomy" id="94232"/>
    <lineage>
        <taxon>Eukaryota</taxon>
        <taxon>Metazoa</taxon>
        <taxon>Chordata</taxon>
        <taxon>Craniata</taxon>
        <taxon>Vertebrata</taxon>
        <taxon>Euteleostomi</taxon>
        <taxon>Actinopterygii</taxon>
        <taxon>Neopterygii</taxon>
        <taxon>Teleostei</taxon>
        <taxon>Neoteleostei</taxon>
        <taxon>Acanthomorphata</taxon>
        <taxon>Eupercaria</taxon>
        <taxon>Perciformes</taxon>
        <taxon>Serranoidei</taxon>
        <taxon>Serranidae</taxon>
        <taxon>Epinephelinae</taxon>
        <taxon>Epinephelini</taxon>
        <taxon>Epinephelus</taxon>
    </lineage>
</organism>
<keyword id="KW-0963">Cytoplasm</keyword>
<keyword id="KW-1015">Disulfide bond</keyword>
<keyword id="KW-0676">Redox-active center</keyword>
<accession>T1SH39</accession>
<evidence type="ECO:0000250" key="1">
    <source>
        <dbReference type="UniProtKB" id="Q9BRA2"/>
    </source>
</evidence>
<evidence type="ECO:0000255" key="2"/>
<evidence type="ECO:0000269" key="3">
    <source>
    </source>
</evidence>
<evidence type="ECO:0000303" key="4">
    <source>
    </source>
</evidence>
<evidence type="ECO:0000305" key="5"/>
<evidence type="ECO:0000312" key="6">
    <source>
        <dbReference type="EMBL" id="AGT42005.1"/>
    </source>
</evidence>